<comment type="function">
    <text evidence="1">Catalyzes a proton abstraction reaction that results in 2,5-elimination of pyruvate from 2-succinyl-5-enolpyruvyl-6-hydroxy-3-cyclohexene-1-carboxylate (SEPHCHC) and the formation of 2-succinyl-6-hydroxy-2,4-cyclohexadiene-1-carboxylate (SHCHC).</text>
</comment>
<comment type="catalytic activity">
    <reaction evidence="1">
        <text>5-enolpyruvoyl-6-hydroxy-2-succinyl-cyclohex-3-ene-1-carboxylate = (1R,6R)-6-hydroxy-2-succinyl-cyclohexa-2,4-diene-1-carboxylate + pyruvate</text>
        <dbReference type="Rhea" id="RHEA:25597"/>
        <dbReference type="ChEBI" id="CHEBI:15361"/>
        <dbReference type="ChEBI" id="CHEBI:58689"/>
        <dbReference type="ChEBI" id="CHEBI:58818"/>
        <dbReference type="EC" id="4.2.99.20"/>
    </reaction>
</comment>
<comment type="pathway">
    <text evidence="1">Quinol/quinone metabolism; 1,4-dihydroxy-2-naphthoate biosynthesis; 1,4-dihydroxy-2-naphthoate from chorismate: step 3/7.</text>
</comment>
<comment type="pathway">
    <text evidence="1">Quinol/quinone metabolism; menaquinone biosynthesis.</text>
</comment>
<comment type="subunit">
    <text evidence="1">Monomer.</text>
</comment>
<comment type="similarity">
    <text evidence="1">Belongs to the AB hydrolase superfamily. MenH family.</text>
</comment>
<reference key="1">
    <citation type="journal article" date="2010" name="PLoS Genet.">
        <title>Genome sequence of the plant growth promoting endophytic bacterium Enterobacter sp. 638.</title>
        <authorList>
            <person name="Taghavi S."/>
            <person name="van der Lelie D."/>
            <person name="Hoffman A."/>
            <person name="Zhang Y.B."/>
            <person name="Walla M.D."/>
            <person name="Vangronsveld J."/>
            <person name="Newman L."/>
            <person name="Monchy S."/>
        </authorList>
    </citation>
    <scope>NUCLEOTIDE SEQUENCE [LARGE SCALE GENOMIC DNA]</scope>
    <source>
        <strain>638</strain>
    </source>
</reference>
<organism>
    <name type="scientific">Enterobacter sp. (strain 638)</name>
    <dbReference type="NCBI Taxonomy" id="399742"/>
    <lineage>
        <taxon>Bacteria</taxon>
        <taxon>Pseudomonadati</taxon>
        <taxon>Pseudomonadota</taxon>
        <taxon>Gammaproteobacteria</taxon>
        <taxon>Enterobacterales</taxon>
        <taxon>Enterobacteriaceae</taxon>
        <taxon>Enterobacter</taxon>
    </lineage>
</organism>
<keyword id="KW-0456">Lyase</keyword>
<keyword id="KW-0474">Menaquinone biosynthesis</keyword>
<protein>
    <recommendedName>
        <fullName evidence="1">2-succinyl-6-hydroxy-2,4-cyclohexadiene-1-carboxylate synthase</fullName>
        <shortName evidence="1">SHCHC synthase</shortName>
        <ecNumber evidence="1">4.2.99.20</ecNumber>
    </recommendedName>
</protein>
<feature type="chain" id="PRO_0000341903" description="2-succinyl-6-hydroxy-2,4-cyclohexadiene-1-carboxylate synthase">
    <location>
        <begin position="1"/>
        <end position="258"/>
    </location>
</feature>
<dbReference type="EC" id="4.2.99.20" evidence="1"/>
<dbReference type="EMBL" id="CP000653">
    <property type="protein sequence ID" value="ABP61478.1"/>
    <property type="molecule type" value="Genomic_DNA"/>
</dbReference>
<dbReference type="RefSeq" id="WP_015959811.1">
    <property type="nucleotide sequence ID" value="NC_009436.1"/>
</dbReference>
<dbReference type="SMR" id="A4WCP8"/>
<dbReference type="STRING" id="399742.Ent638_2813"/>
<dbReference type="ESTHER" id="ent38-menh">
    <property type="family name" value="MenH_SHCHC"/>
</dbReference>
<dbReference type="KEGG" id="ent:Ent638_2813"/>
<dbReference type="eggNOG" id="COG0596">
    <property type="taxonomic scope" value="Bacteria"/>
</dbReference>
<dbReference type="HOGENOM" id="CLU_020336_38_2_6"/>
<dbReference type="OrthoDB" id="9808398at2"/>
<dbReference type="UniPathway" id="UPA00079"/>
<dbReference type="UniPathway" id="UPA01057">
    <property type="reaction ID" value="UER00900"/>
</dbReference>
<dbReference type="Proteomes" id="UP000000230">
    <property type="component" value="Chromosome"/>
</dbReference>
<dbReference type="GO" id="GO:0070205">
    <property type="term" value="F:2-succinyl-6-hydroxy-2,4-cyclohexadiene-1-carboxylate synthase activity"/>
    <property type="evidence" value="ECO:0007669"/>
    <property type="project" value="UniProtKB-UniRule"/>
</dbReference>
<dbReference type="GO" id="GO:0009234">
    <property type="term" value="P:menaquinone biosynthetic process"/>
    <property type="evidence" value="ECO:0007669"/>
    <property type="project" value="UniProtKB-UniRule"/>
</dbReference>
<dbReference type="Gene3D" id="3.40.50.1820">
    <property type="entry name" value="alpha/beta hydrolase"/>
    <property type="match status" value="1"/>
</dbReference>
<dbReference type="HAMAP" id="MF_01660">
    <property type="entry name" value="MenH"/>
    <property type="match status" value="1"/>
</dbReference>
<dbReference type="InterPro" id="IPR000073">
    <property type="entry name" value="AB_hydrolase_1"/>
</dbReference>
<dbReference type="InterPro" id="IPR029058">
    <property type="entry name" value="AB_hydrolase_fold"/>
</dbReference>
<dbReference type="InterPro" id="IPR022485">
    <property type="entry name" value="SHCHC_synthase_MenH"/>
</dbReference>
<dbReference type="NCBIfam" id="TIGR03695">
    <property type="entry name" value="menH_SHCHC"/>
    <property type="match status" value="1"/>
</dbReference>
<dbReference type="NCBIfam" id="NF008340">
    <property type="entry name" value="PRK11126.1"/>
    <property type="match status" value="1"/>
</dbReference>
<dbReference type="PANTHER" id="PTHR42916">
    <property type="entry name" value="2-SUCCINYL-5-ENOLPYRUVYL-6-HYDROXY-3-CYCLOHEXENE-1-CARBOXYLATE SYNTHASE"/>
    <property type="match status" value="1"/>
</dbReference>
<dbReference type="PANTHER" id="PTHR42916:SF1">
    <property type="entry name" value="PROTEIN PHYLLO, CHLOROPLASTIC"/>
    <property type="match status" value="1"/>
</dbReference>
<dbReference type="Pfam" id="PF00561">
    <property type="entry name" value="Abhydrolase_1"/>
    <property type="match status" value="1"/>
</dbReference>
<dbReference type="SUPFAM" id="SSF53474">
    <property type="entry name" value="alpha/beta-Hydrolases"/>
    <property type="match status" value="1"/>
</dbReference>
<name>MENH_ENT38</name>
<sequence length="258" mass="28379">MILNGKTRAGKPGFPWLVFLHGFSGDSREWQDVGAQLPDYPQLHLDLPGHGDSANIAVAGFDEVSQLLADTLVSYNILKFWLVGYSLGGRIAMFHACQHPAGLIGLIVEGGHPGLHDEPTRKARAESDAQWAERFRREPLENVFSAWYQQPVFAALQETERDALVALRSQNNGAALGAMLQATSLAQQPDLRAALRAHDYPFHYVYGEHDDKFGAIATELTAQRHVIPNAGHNAHRENPAAVAACLAQILRLRIKDIP</sequence>
<gene>
    <name evidence="1" type="primary">menH</name>
    <name type="ordered locus">Ent638_2813</name>
</gene>
<proteinExistence type="inferred from homology"/>
<accession>A4WCP8</accession>
<evidence type="ECO:0000255" key="1">
    <source>
        <dbReference type="HAMAP-Rule" id="MF_01660"/>
    </source>
</evidence>